<accession>B7MS23</accession>
<protein>
    <recommendedName>
        <fullName evidence="1">3-phosphoshikimate 1-carboxyvinyltransferase</fullName>
        <ecNumber evidence="1">2.5.1.19</ecNumber>
    </recommendedName>
    <alternativeName>
        <fullName evidence="1">5-enolpyruvylshikimate-3-phosphate synthase</fullName>
        <shortName evidence="1">EPSP synthase</shortName>
        <shortName evidence="1">EPSPS</shortName>
    </alternativeName>
</protein>
<comment type="function">
    <text evidence="1">Catalyzes the transfer of the enolpyruvyl moiety of phosphoenolpyruvate (PEP) to the 5-hydroxyl of shikimate-3-phosphate (S3P) to produce enolpyruvyl shikimate-3-phosphate and inorganic phosphate.</text>
</comment>
<comment type="catalytic activity">
    <reaction evidence="1">
        <text>3-phosphoshikimate + phosphoenolpyruvate = 5-O-(1-carboxyvinyl)-3-phosphoshikimate + phosphate</text>
        <dbReference type="Rhea" id="RHEA:21256"/>
        <dbReference type="ChEBI" id="CHEBI:43474"/>
        <dbReference type="ChEBI" id="CHEBI:57701"/>
        <dbReference type="ChEBI" id="CHEBI:58702"/>
        <dbReference type="ChEBI" id="CHEBI:145989"/>
        <dbReference type="EC" id="2.5.1.19"/>
    </reaction>
    <physiologicalReaction direction="left-to-right" evidence="1">
        <dbReference type="Rhea" id="RHEA:21257"/>
    </physiologicalReaction>
</comment>
<comment type="pathway">
    <text evidence="1">Metabolic intermediate biosynthesis; chorismate biosynthesis; chorismate from D-erythrose 4-phosphate and phosphoenolpyruvate: step 6/7.</text>
</comment>
<comment type="subunit">
    <text evidence="1">Monomer.</text>
</comment>
<comment type="subcellular location">
    <subcellularLocation>
        <location evidence="1">Cytoplasm</location>
    </subcellularLocation>
</comment>
<comment type="similarity">
    <text evidence="1">Belongs to the EPSP synthase family.</text>
</comment>
<proteinExistence type="inferred from homology"/>
<reference key="1">
    <citation type="journal article" date="2009" name="PLoS Genet.">
        <title>Organised genome dynamics in the Escherichia coli species results in highly diverse adaptive paths.</title>
        <authorList>
            <person name="Touchon M."/>
            <person name="Hoede C."/>
            <person name="Tenaillon O."/>
            <person name="Barbe V."/>
            <person name="Baeriswyl S."/>
            <person name="Bidet P."/>
            <person name="Bingen E."/>
            <person name="Bonacorsi S."/>
            <person name="Bouchier C."/>
            <person name="Bouvet O."/>
            <person name="Calteau A."/>
            <person name="Chiapello H."/>
            <person name="Clermont O."/>
            <person name="Cruveiller S."/>
            <person name="Danchin A."/>
            <person name="Diard M."/>
            <person name="Dossat C."/>
            <person name="Karoui M.E."/>
            <person name="Frapy E."/>
            <person name="Garry L."/>
            <person name="Ghigo J.M."/>
            <person name="Gilles A.M."/>
            <person name="Johnson J."/>
            <person name="Le Bouguenec C."/>
            <person name="Lescat M."/>
            <person name="Mangenot S."/>
            <person name="Martinez-Jehanne V."/>
            <person name="Matic I."/>
            <person name="Nassif X."/>
            <person name="Oztas S."/>
            <person name="Petit M.A."/>
            <person name="Pichon C."/>
            <person name="Rouy Z."/>
            <person name="Ruf C.S."/>
            <person name="Schneider D."/>
            <person name="Tourret J."/>
            <person name="Vacherie B."/>
            <person name="Vallenet D."/>
            <person name="Medigue C."/>
            <person name="Rocha E.P.C."/>
            <person name="Denamur E."/>
        </authorList>
    </citation>
    <scope>NUCLEOTIDE SEQUENCE [LARGE SCALE GENOMIC DNA]</scope>
    <source>
        <strain>ED1a</strain>
    </source>
</reference>
<feature type="chain" id="PRO_1000124687" description="3-phosphoshikimate 1-carboxyvinyltransferase">
    <location>
        <begin position="1"/>
        <end position="427"/>
    </location>
</feature>
<feature type="active site" description="Proton acceptor" evidence="1">
    <location>
        <position position="313"/>
    </location>
</feature>
<feature type="binding site" evidence="1">
    <location>
        <position position="22"/>
    </location>
    <ligand>
        <name>3-phosphoshikimate</name>
        <dbReference type="ChEBI" id="CHEBI:145989"/>
    </ligand>
</feature>
<feature type="binding site" evidence="1">
    <location>
        <position position="22"/>
    </location>
    <ligand>
        <name>phosphoenolpyruvate</name>
        <dbReference type="ChEBI" id="CHEBI:58702"/>
    </ligand>
</feature>
<feature type="binding site" evidence="1">
    <location>
        <position position="23"/>
    </location>
    <ligand>
        <name>3-phosphoshikimate</name>
        <dbReference type="ChEBI" id="CHEBI:145989"/>
    </ligand>
</feature>
<feature type="binding site" evidence="1">
    <location>
        <position position="27"/>
    </location>
    <ligand>
        <name>3-phosphoshikimate</name>
        <dbReference type="ChEBI" id="CHEBI:145989"/>
    </ligand>
</feature>
<feature type="binding site" evidence="1">
    <location>
        <position position="96"/>
    </location>
    <ligand>
        <name>phosphoenolpyruvate</name>
        <dbReference type="ChEBI" id="CHEBI:58702"/>
    </ligand>
</feature>
<feature type="binding site" evidence="1">
    <location>
        <position position="124"/>
    </location>
    <ligand>
        <name>phosphoenolpyruvate</name>
        <dbReference type="ChEBI" id="CHEBI:58702"/>
    </ligand>
</feature>
<feature type="binding site" evidence="1">
    <location>
        <position position="169"/>
    </location>
    <ligand>
        <name>3-phosphoshikimate</name>
        <dbReference type="ChEBI" id="CHEBI:145989"/>
    </ligand>
</feature>
<feature type="binding site" evidence="1">
    <location>
        <position position="170"/>
    </location>
    <ligand>
        <name>3-phosphoshikimate</name>
        <dbReference type="ChEBI" id="CHEBI:145989"/>
    </ligand>
</feature>
<feature type="binding site" evidence="1">
    <location>
        <position position="171"/>
    </location>
    <ligand>
        <name>3-phosphoshikimate</name>
        <dbReference type="ChEBI" id="CHEBI:145989"/>
    </ligand>
</feature>
<feature type="binding site" evidence="1">
    <location>
        <position position="171"/>
    </location>
    <ligand>
        <name>phosphoenolpyruvate</name>
        <dbReference type="ChEBI" id="CHEBI:58702"/>
    </ligand>
</feature>
<feature type="binding site" evidence="1">
    <location>
        <position position="197"/>
    </location>
    <ligand>
        <name>3-phosphoshikimate</name>
        <dbReference type="ChEBI" id="CHEBI:145989"/>
    </ligand>
</feature>
<feature type="binding site" evidence="1">
    <location>
        <position position="313"/>
    </location>
    <ligand>
        <name>3-phosphoshikimate</name>
        <dbReference type="ChEBI" id="CHEBI:145989"/>
    </ligand>
</feature>
<feature type="binding site" evidence="1">
    <location>
        <position position="336"/>
    </location>
    <ligand>
        <name>3-phosphoshikimate</name>
        <dbReference type="ChEBI" id="CHEBI:145989"/>
    </ligand>
</feature>
<feature type="binding site" evidence="1">
    <location>
        <position position="340"/>
    </location>
    <ligand>
        <name>3-phosphoshikimate</name>
        <dbReference type="ChEBI" id="CHEBI:145989"/>
    </ligand>
</feature>
<feature type="binding site" evidence="1">
    <location>
        <position position="344"/>
    </location>
    <ligand>
        <name>phosphoenolpyruvate</name>
        <dbReference type="ChEBI" id="CHEBI:58702"/>
    </ligand>
</feature>
<feature type="binding site" evidence="1">
    <location>
        <position position="386"/>
    </location>
    <ligand>
        <name>phosphoenolpyruvate</name>
        <dbReference type="ChEBI" id="CHEBI:58702"/>
    </ligand>
</feature>
<feature type="binding site" evidence="1">
    <location>
        <position position="411"/>
    </location>
    <ligand>
        <name>phosphoenolpyruvate</name>
        <dbReference type="ChEBI" id="CHEBI:58702"/>
    </ligand>
</feature>
<keyword id="KW-0028">Amino-acid biosynthesis</keyword>
<keyword id="KW-0057">Aromatic amino acid biosynthesis</keyword>
<keyword id="KW-0963">Cytoplasm</keyword>
<keyword id="KW-0808">Transferase</keyword>
<sequence>MESLTLQPIARVDGTINLPGSKSVSNRALLLAALAHGKTVLTNLLDSDDVRHMLNALTALGVSYTLSADRTRCEIIGNGGPLHAESARELFLGNAGTAMRPLAAALCLGSNDIVLTGEPRMKERPIGHLVDALRQGGAKITYLEQENYPPLRLQGGFTGGNVDVDGSVSSQFLTALLMTAPLAPEDTVIRIKGDLVSKPYIDITLNLMKTFGVEIENQHYQQFVVKGGQSYQSPGTYLVEGDASSASYFLAAAAIRGGTVKVTGIGRNSMQGDIRFADVLEKMGATICWGDDYISCTRGELNAIDMDMNHIPDAAMTIATAALFAKGTTTLRNIYNWRVKETDRLFAMATELRKVGAEVEEGHDFIRITPPEKLKFAEIATYNDHRMAMCFSLVALSDTPVTILDPKCTAKTFPDYFEQLARISQPG</sequence>
<evidence type="ECO:0000255" key="1">
    <source>
        <dbReference type="HAMAP-Rule" id="MF_00210"/>
    </source>
</evidence>
<dbReference type="EC" id="2.5.1.19" evidence="1"/>
<dbReference type="EMBL" id="CU928162">
    <property type="protein sequence ID" value="CAR07137.1"/>
    <property type="molecule type" value="Genomic_DNA"/>
</dbReference>
<dbReference type="RefSeq" id="WP_000445244.1">
    <property type="nucleotide sequence ID" value="NC_011745.1"/>
</dbReference>
<dbReference type="SMR" id="B7MS23"/>
<dbReference type="KEGG" id="ecq:ECED1_0935"/>
<dbReference type="HOGENOM" id="CLU_024321_0_0_6"/>
<dbReference type="UniPathway" id="UPA00053">
    <property type="reaction ID" value="UER00089"/>
</dbReference>
<dbReference type="Proteomes" id="UP000000748">
    <property type="component" value="Chromosome"/>
</dbReference>
<dbReference type="GO" id="GO:0005737">
    <property type="term" value="C:cytoplasm"/>
    <property type="evidence" value="ECO:0007669"/>
    <property type="project" value="UniProtKB-SubCell"/>
</dbReference>
<dbReference type="GO" id="GO:0003866">
    <property type="term" value="F:3-phosphoshikimate 1-carboxyvinyltransferase activity"/>
    <property type="evidence" value="ECO:0007669"/>
    <property type="project" value="UniProtKB-UniRule"/>
</dbReference>
<dbReference type="GO" id="GO:0008652">
    <property type="term" value="P:amino acid biosynthetic process"/>
    <property type="evidence" value="ECO:0007669"/>
    <property type="project" value="UniProtKB-KW"/>
</dbReference>
<dbReference type="GO" id="GO:0009073">
    <property type="term" value="P:aromatic amino acid family biosynthetic process"/>
    <property type="evidence" value="ECO:0007669"/>
    <property type="project" value="UniProtKB-KW"/>
</dbReference>
<dbReference type="GO" id="GO:0009423">
    <property type="term" value="P:chorismate biosynthetic process"/>
    <property type="evidence" value="ECO:0007669"/>
    <property type="project" value="UniProtKB-UniRule"/>
</dbReference>
<dbReference type="CDD" id="cd01554">
    <property type="entry name" value="EPT-like"/>
    <property type="match status" value="1"/>
</dbReference>
<dbReference type="FunFam" id="3.65.10.10:FF:000003">
    <property type="entry name" value="3-phosphoshikimate 1-carboxyvinyltransferase"/>
    <property type="match status" value="1"/>
</dbReference>
<dbReference type="FunFam" id="3.65.10.10:FF:000004">
    <property type="entry name" value="3-phosphoshikimate 1-carboxyvinyltransferase"/>
    <property type="match status" value="1"/>
</dbReference>
<dbReference type="Gene3D" id="3.65.10.10">
    <property type="entry name" value="Enolpyruvate transferase domain"/>
    <property type="match status" value="2"/>
</dbReference>
<dbReference type="HAMAP" id="MF_00210">
    <property type="entry name" value="EPSP_synth"/>
    <property type="match status" value="1"/>
</dbReference>
<dbReference type="InterPro" id="IPR001986">
    <property type="entry name" value="Enolpyruvate_Tfrase_dom"/>
</dbReference>
<dbReference type="InterPro" id="IPR036968">
    <property type="entry name" value="Enolpyruvate_Tfrase_sf"/>
</dbReference>
<dbReference type="InterPro" id="IPR006264">
    <property type="entry name" value="EPSP_synthase"/>
</dbReference>
<dbReference type="InterPro" id="IPR023193">
    <property type="entry name" value="EPSP_synthase_CS"/>
</dbReference>
<dbReference type="InterPro" id="IPR013792">
    <property type="entry name" value="RNA3'P_cycl/enolpyr_Trfase_a/b"/>
</dbReference>
<dbReference type="NCBIfam" id="TIGR01356">
    <property type="entry name" value="aroA"/>
    <property type="match status" value="1"/>
</dbReference>
<dbReference type="PANTHER" id="PTHR21090">
    <property type="entry name" value="AROM/DEHYDROQUINATE SYNTHASE"/>
    <property type="match status" value="1"/>
</dbReference>
<dbReference type="PANTHER" id="PTHR21090:SF5">
    <property type="entry name" value="PENTAFUNCTIONAL AROM POLYPEPTIDE"/>
    <property type="match status" value="1"/>
</dbReference>
<dbReference type="Pfam" id="PF00275">
    <property type="entry name" value="EPSP_synthase"/>
    <property type="match status" value="1"/>
</dbReference>
<dbReference type="PIRSF" id="PIRSF000505">
    <property type="entry name" value="EPSPS"/>
    <property type="match status" value="1"/>
</dbReference>
<dbReference type="SUPFAM" id="SSF55205">
    <property type="entry name" value="EPT/RTPC-like"/>
    <property type="match status" value="1"/>
</dbReference>
<dbReference type="PROSITE" id="PS00104">
    <property type="entry name" value="EPSP_SYNTHASE_1"/>
    <property type="match status" value="1"/>
</dbReference>
<dbReference type="PROSITE" id="PS00885">
    <property type="entry name" value="EPSP_SYNTHASE_2"/>
    <property type="match status" value="1"/>
</dbReference>
<organism>
    <name type="scientific">Escherichia coli O81 (strain ED1a)</name>
    <dbReference type="NCBI Taxonomy" id="585397"/>
    <lineage>
        <taxon>Bacteria</taxon>
        <taxon>Pseudomonadati</taxon>
        <taxon>Pseudomonadota</taxon>
        <taxon>Gammaproteobacteria</taxon>
        <taxon>Enterobacterales</taxon>
        <taxon>Enterobacteriaceae</taxon>
        <taxon>Escherichia</taxon>
    </lineage>
</organism>
<gene>
    <name evidence="1" type="primary">aroA</name>
    <name type="ordered locus">ECED1_0935</name>
</gene>
<name>AROA_ECO81</name>